<evidence type="ECO:0000250" key="1"/>
<evidence type="ECO:0000255" key="2"/>
<evidence type="ECO:0000269" key="3">
    <source>
    </source>
</evidence>
<evidence type="ECO:0000305" key="4"/>
<comment type="function">
    <text evidence="3">Catalyzes the flavin-dependent Baeyer-Villiger oxidation of 1-deoxy-11-oxopentalenic acid to pentalenolactone D in the biosynthesis of pentalenolactone antibiotic.</text>
</comment>
<comment type="catalytic activity">
    <reaction evidence="3">
        <text>1-deoxy-11-oxopentalenate + NADPH + O2 + H(+) = pentalenolactone D + NADP(+) + H2O</text>
        <dbReference type="Rhea" id="RHEA:34635"/>
        <dbReference type="ChEBI" id="CHEBI:15377"/>
        <dbReference type="ChEBI" id="CHEBI:15378"/>
        <dbReference type="ChEBI" id="CHEBI:15379"/>
        <dbReference type="ChEBI" id="CHEBI:57783"/>
        <dbReference type="ChEBI" id="CHEBI:58349"/>
        <dbReference type="ChEBI" id="CHEBI:70780"/>
        <dbReference type="ChEBI" id="CHEBI:70787"/>
        <dbReference type="EC" id="1.14.13.170"/>
    </reaction>
</comment>
<comment type="cofactor">
    <cofactor evidence="1">
        <name>FAD</name>
        <dbReference type="ChEBI" id="CHEBI:57692"/>
    </cofactor>
    <text evidence="1">Binds 1 FAD per subunit.</text>
</comment>
<comment type="pathway">
    <text evidence="3">Antibiotic biosynthesis; pentalenolactone biosynthesis.</text>
</comment>
<comment type="similarity">
    <text evidence="4">Belongs to the FAD-binding monooxygenase family.</text>
</comment>
<organism>
    <name type="scientific">Streptomyces exfoliatus</name>
    <name type="common">Streptomyces hydrogenans</name>
    <dbReference type="NCBI Taxonomy" id="1905"/>
    <lineage>
        <taxon>Bacteria</taxon>
        <taxon>Bacillati</taxon>
        <taxon>Actinomycetota</taxon>
        <taxon>Actinomycetes</taxon>
        <taxon>Kitasatosporales</taxon>
        <taxon>Streptomycetaceae</taxon>
        <taxon>Streptomyces</taxon>
    </lineage>
</organism>
<gene>
    <name type="primary">penE</name>
</gene>
<proteinExistence type="evidence at protein level"/>
<protein>
    <recommendedName>
        <fullName>Pentalenolactone D synthase</fullName>
        <ecNumber>1.14.13.170</ecNumber>
    </recommendedName>
    <alternativeName>
        <fullName>Pentalenolactone biosynthesis protein E</fullName>
    </alternativeName>
</protein>
<keyword id="KW-0045">Antibiotic biosynthesis</keyword>
<keyword id="KW-0274">FAD</keyword>
<keyword id="KW-0285">Flavoprotein</keyword>
<keyword id="KW-0503">Monooxygenase</keyword>
<keyword id="KW-0521">NADP</keyword>
<keyword id="KW-0560">Oxidoreductase</keyword>
<reference key="1">
    <citation type="journal article" date="2011" name="J. Am. Chem. Soc.">
        <title>Genome mining in streptomyces. Discovery of an unprecedented P450-catalyzed oxidative rearrangement that is the final step in the biosynthesis of pentalenolactone.</title>
        <authorList>
            <person name="Zhu D."/>
            <person name="Seo M.J."/>
            <person name="Ikeda H."/>
            <person name="Cane D.E."/>
        </authorList>
    </citation>
    <scope>NUCLEOTIDE SEQUENCE [GENOMIC DNA]</scope>
    <source>
        <strain>UC5319</strain>
    </source>
</reference>
<reference key="2">
    <citation type="journal article" date="2011" name="Biochemistry">
        <title>Genome mining in Streptomyces. Elucidation of the role of Baeyer-Villiger monooxygenases and non-heme iron-dependent dehydrogenase/oxygenases in the final steps of the biosynthesis of pentalenolactone and neopentalenolactone.</title>
        <authorList>
            <person name="Seo M.J."/>
            <person name="Zhu D."/>
            <person name="Endo S."/>
            <person name="Ikeda H."/>
            <person name="Cane D.E."/>
        </authorList>
    </citation>
    <scope>FUNCTION</scope>
    <scope>CATALYTIC ACTIVITY</scope>
    <scope>PATHWAY</scope>
    <source>
        <strain>UC5319</strain>
    </source>
</reference>
<name>PENE_STREX</name>
<sequence length="584" mass="65386">MREKYRQERDKRSVGRTYQFARGDFSRYARDPYTERQEREPLTDEVDVAVVGAGIGGLLTGAHLRKETGLERIRLIDGAGDVGGTWYWNRFPGVRCDVESYIYMPLLEETGTIPREKYSTGPEIFAHLQQIAHRYDLYRDALFQTTVTELRWDEAAGRWLVSTDRGDLIRARYVAMSIGLMHRPKLPGLPGLETFAGHSFHTSRWDFDYTGGDSTGGLTKLKDKKVGVIGTGSTTIQLAPHLAEWAEQLILFQRTPAAVDVRGNRPTPPEWAAGLAPGWQQRRMENFHALTSGVPQDEDLVQDRWTQTTAKLAAAILPTGDTGGDPKERALAAERADFLKMEELRARIDSVVTDPATAAALKPYYRVYCKRPCFHDGYLQTFNRPNVTLVDTQGQGVERLTPAGVVANGREYPLDCLIFATGYEHEFAVPYTERAGYDIVGRDGLRLSEKWADGARTLHGLQVNGFPNCFILSKVQAGRHVNIAYMLGEQTRHLAHIVKCVEERGHQVVEASEAGEKEWVEEILRLATNDIDFLENCTPGLYNNEGDPSGLPLLNSSYGGGSVEFVNILRRWREAGDLAGLELR</sequence>
<dbReference type="EC" id="1.14.13.170"/>
<dbReference type="EMBL" id="HQ292066">
    <property type="protein sequence ID" value="ADO85591.1"/>
    <property type="molecule type" value="Genomic_DNA"/>
</dbReference>
<dbReference type="SMR" id="E3VWK3"/>
<dbReference type="KEGG" id="ag:ADO85591"/>
<dbReference type="BioCyc" id="MetaCyc:MONOMER-16844"/>
<dbReference type="UniPathway" id="UPA00974"/>
<dbReference type="GO" id="GO:0102285">
    <property type="term" value="F:1-deoxy-11-oxopentalenate oxygenase activity"/>
    <property type="evidence" value="ECO:0007669"/>
    <property type="project" value="UniProtKB-EC"/>
</dbReference>
<dbReference type="GO" id="GO:0016709">
    <property type="term" value="F:oxidoreductase activity, acting on paired donors, with incorporation or reduction of molecular oxygen, NAD(P)H as one donor, and incorporation of one atom of oxygen"/>
    <property type="evidence" value="ECO:0000314"/>
    <property type="project" value="UniProtKB"/>
</dbReference>
<dbReference type="GO" id="GO:0017000">
    <property type="term" value="P:antibiotic biosynthetic process"/>
    <property type="evidence" value="ECO:0007669"/>
    <property type="project" value="UniProtKB-KW"/>
</dbReference>
<dbReference type="GO" id="GO:1901780">
    <property type="term" value="P:pentalenolactone biosynthetic process"/>
    <property type="evidence" value="ECO:0000314"/>
    <property type="project" value="UniProtKB"/>
</dbReference>
<dbReference type="FunFam" id="3.50.50.60:FF:000314">
    <property type="entry name" value="Baeyer-Villiger monooxygenase"/>
    <property type="match status" value="1"/>
</dbReference>
<dbReference type="FunFam" id="3.50.50.60:FF:000341">
    <property type="entry name" value="Baeyer-Villiger monooxygenase"/>
    <property type="match status" value="1"/>
</dbReference>
<dbReference type="Gene3D" id="3.50.50.60">
    <property type="entry name" value="FAD/NAD(P)-binding domain"/>
    <property type="match status" value="2"/>
</dbReference>
<dbReference type="InterPro" id="IPR050775">
    <property type="entry name" value="FAD-binding_Monooxygenases"/>
</dbReference>
<dbReference type="InterPro" id="IPR036188">
    <property type="entry name" value="FAD/NAD-bd_sf"/>
</dbReference>
<dbReference type="InterPro" id="IPR054972">
    <property type="entry name" value="Neo-PentlctneDsynPtlE"/>
</dbReference>
<dbReference type="NCBIfam" id="NF045818">
    <property type="entry name" value="Neo-PentlctneDsynPtlE"/>
    <property type="match status" value="1"/>
</dbReference>
<dbReference type="PANTHER" id="PTHR43098:SF4">
    <property type="entry name" value="BLR3857 PROTEIN"/>
    <property type="match status" value="1"/>
</dbReference>
<dbReference type="PANTHER" id="PTHR43098">
    <property type="entry name" value="L-ORNITHINE N(5)-MONOOXYGENASE-RELATED"/>
    <property type="match status" value="1"/>
</dbReference>
<dbReference type="Pfam" id="PF13450">
    <property type="entry name" value="NAD_binding_8"/>
    <property type="match status" value="1"/>
</dbReference>
<dbReference type="SUPFAM" id="SSF51905">
    <property type="entry name" value="FAD/NAD(P)-binding domain"/>
    <property type="match status" value="1"/>
</dbReference>
<feature type="chain" id="PRO_0000422005" description="Pentalenolactone D synthase">
    <location>
        <begin position="1"/>
        <end position="584"/>
    </location>
</feature>
<feature type="binding site" evidence="1">
    <location>
        <begin position="55"/>
        <end position="56"/>
    </location>
    <ligand>
        <name>FAD</name>
        <dbReference type="ChEBI" id="CHEBI:57692"/>
    </ligand>
</feature>
<feature type="binding site" evidence="1">
    <location>
        <begin position="77"/>
        <end position="78"/>
    </location>
    <ligand>
        <name>FAD</name>
        <dbReference type="ChEBI" id="CHEBI:57692"/>
    </ligand>
</feature>
<feature type="binding site" evidence="1">
    <location>
        <begin position="85"/>
        <end position="86"/>
    </location>
    <ligand>
        <name>FAD</name>
        <dbReference type="ChEBI" id="CHEBI:57692"/>
    </ligand>
</feature>
<feature type="binding site" evidence="1">
    <location>
        <begin position="97"/>
        <end position="98"/>
    </location>
    <ligand>
        <name>FAD</name>
        <dbReference type="ChEBI" id="CHEBI:57692"/>
    </ligand>
</feature>
<feature type="binding site" evidence="1">
    <location>
        <position position="103"/>
    </location>
    <ligand>
        <name>FAD</name>
        <dbReference type="ChEBI" id="CHEBI:57692"/>
    </ligand>
</feature>
<feature type="binding site" evidence="1">
    <location>
        <position position="147"/>
    </location>
    <ligand>
        <name>FAD</name>
        <dbReference type="ChEBI" id="CHEBI:57692"/>
    </ligand>
</feature>
<feature type="binding site" evidence="1">
    <location>
        <position position="486"/>
    </location>
    <ligand>
        <name>FAD</name>
        <dbReference type="ChEBI" id="CHEBI:57692"/>
    </ligand>
</feature>
<feature type="site" description="Transition state stabilizer" evidence="2">
    <location>
        <position position="371"/>
    </location>
</feature>
<accession>E3VWK3</accession>